<gene>
    <name evidence="1" type="primary">MT-ATP8</name>
    <name type="synonym">ATP8</name>
    <name type="synonym">ATPASE8</name>
    <name type="synonym">MTATP8</name>
</gene>
<geneLocation type="mitochondrion"/>
<organism>
    <name type="scientific">Phoca vitulina</name>
    <name type="common">Harbor seal</name>
    <dbReference type="NCBI Taxonomy" id="9720"/>
    <lineage>
        <taxon>Eukaryota</taxon>
        <taxon>Metazoa</taxon>
        <taxon>Chordata</taxon>
        <taxon>Craniata</taxon>
        <taxon>Vertebrata</taxon>
        <taxon>Euteleostomi</taxon>
        <taxon>Mammalia</taxon>
        <taxon>Eutheria</taxon>
        <taxon>Laurasiatheria</taxon>
        <taxon>Carnivora</taxon>
        <taxon>Caniformia</taxon>
        <taxon>Pinnipedia</taxon>
        <taxon>Phocidae</taxon>
        <taxon>Phocinae</taxon>
        <taxon>Phoca</taxon>
    </lineage>
</organism>
<sequence length="67" mass="7884">MPQLDTSTWLIMILSMILTLFITFQLKVSKHYFPTNPEPKHTPLLKNSAPWEEKWTKIYSPLSLPLQ</sequence>
<evidence type="ECO:0000250" key="1">
    <source>
        <dbReference type="UniProtKB" id="P03928"/>
    </source>
</evidence>
<evidence type="ECO:0000250" key="2">
    <source>
        <dbReference type="UniProtKB" id="P03930"/>
    </source>
</evidence>
<evidence type="ECO:0000250" key="3">
    <source>
        <dbReference type="UniProtKB" id="P19483"/>
    </source>
</evidence>
<evidence type="ECO:0000255" key="4"/>
<evidence type="ECO:0000305" key="5"/>
<name>ATP8_PHOVI</name>
<proteinExistence type="inferred from homology"/>
<accession>Q00522</accession>
<accession>Q08H15</accession>
<comment type="function">
    <text evidence="1 3">Subunit 8, of the mitochondrial membrane ATP synthase complex (F(1)F(0) ATP synthase or Complex V) that produces ATP from ADP in the presence of a proton gradient across the membrane which is generated by electron transport complexes of the respiratory chain. ATP synthase complex consist of a soluble F(1) head domain - the catalytic core - and a membrane F(1) domain - the membrane proton channel. These two domains are linked by a central stalk rotating inside the F(1) region and a stationary peripheral stalk. During catalysis, ATP synthesis in the catalytic domain of F(1) is coupled via a rotary mechanism of the central stalk subunits to proton translocation (By similarity). In vivo, can only synthesize ATP although its ATP hydrolase activity can be activated artificially in vitro (By similarity). Part of the complex F(0) domain (By similarity).</text>
</comment>
<comment type="subunit">
    <text evidence="1">Component of the ATP synthase complex composed at least of ATP5F1A/subunit alpha, ATP5F1B/subunit beta, ATP5MC1/subunit c (homooctomer), MT-ATP6/subunit a, MT-ATP8/subunit 8, ATP5ME/subunit e, ATP5MF/subunit f, ATP5MG/subunit g, ATP5MK/subunit k, ATP5MJ/subunit j, ATP5F1C/subunit gamma, ATP5F1D/subunit delta, ATP5F1E/subunit epsilon, ATP5PF/subunit F6, ATP5PB/subunit b, ATP5PD/subunit d, ATP5PO/subunit OSCP. ATP synthase complex consists of a soluble F(1) head domain (subunits alpha(3) and beta(3)) - the catalytic core - and a membrane F(0) domain - the membrane proton channel (subunits c, a, 8, e, f, g, k and j). These two domains are linked by a central stalk (subunits gamma, delta, and epsilon) rotating inside the F1 region and a stationary peripheral stalk (subunits F6, b, d, and OSCP). Interacts with PRICKLE3.</text>
</comment>
<comment type="subcellular location">
    <subcellularLocation>
        <location>Mitochondrion membrane</location>
        <topology>Single-pass membrane protein</topology>
    </subcellularLocation>
</comment>
<comment type="similarity">
    <text evidence="5">Belongs to the ATPase protein 8 family.</text>
</comment>
<dbReference type="EMBL" id="X63726">
    <property type="protein sequence ID" value="CAA45261.1"/>
    <property type="molecule type" value="Genomic_DNA"/>
</dbReference>
<dbReference type="EMBL" id="AM181032">
    <property type="protein sequence ID" value="CAJ57083.1"/>
    <property type="molecule type" value="Genomic_DNA"/>
</dbReference>
<dbReference type="PIR" id="S26155">
    <property type="entry name" value="S26155"/>
</dbReference>
<dbReference type="RefSeq" id="NP_006932.1">
    <property type="nucleotide sequence ID" value="NC_001325.1"/>
</dbReference>
<dbReference type="SMR" id="Q00522"/>
<dbReference type="GeneID" id="807657"/>
<dbReference type="CTD" id="4509"/>
<dbReference type="OrthoDB" id="21976at33554"/>
<dbReference type="GO" id="GO:0031966">
    <property type="term" value="C:mitochondrial membrane"/>
    <property type="evidence" value="ECO:0007669"/>
    <property type="project" value="UniProtKB-SubCell"/>
</dbReference>
<dbReference type="GO" id="GO:0045259">
    <property type="term" value="C:proton-transporting ATP synthase complex"/>
    <property type="evidence" value="ECO:0000250"/>
    <property type="project" value="UniProtKB"/>
</dbReference>
<dbReference type="GO" id="GO:0015078">
    <property type="term" value="F:proton transmembrane transporter activity"/>
    <property type="evidence" value="ECO:0007669"/>
    <property type="project" value="InterPro"/>
</dbReference>
<dbReference type="GO" id="GO:0015986">
    <property type="term" value="P:proton motive force-driven ATP synthesis"/>
    <property type="evidence" value="ECO:0007669"/>
    <property type="project" value="InterPro"/>
</dbReference>
<dbReference type="InterPro" id="IPR039017">
    <property type="entry name" value="ATP8_mammal"/>
</dbReference>
<dbReference type="InterPro" id="IPR001421">
    <property type="entry name" value="ATP8_metazoa"/>
</dbReference>
<dbReference type="PANTHER" id="PTHR13722">
    <property type="entry name" value="ATP SYNTHASE PROTEIN 8"/>
    <property type="match status" value="1"/>
</dbReference>
<dbReference type="PANTHER" id="PTHR13722:SF0">
    <property type="entry name" value="ATP SYNTHASE PROTEIN 8"/>
    <property type="match status" value="1"/>
</dbReference>
<dbReference type="Pfam" id="PF00895">
    <property type="entry name" value="ATP-synt_8"/>
    <property type="match status" value="1"/>
</dbReference>
<protein>
    <recommendedName>
        <fullName evidence="1">ATP synthase F(0) complex subunit 8</fullName>
    </recommendedName>
    <alternativeName>
        <fullName>A6L</fullName>
    </alternativeName>
    <alternativeName>
        <fullName>F-ATPase subunit 8</fullName>
    </alternativeName>
</protein>
<keyword id="KW-0007">Acetylation</keyword>
<keyword id="KW-0066">ATP synthesis</keyword>
<keyword id="KW-0138">CF(0)</keyword>
<keyword id="KW-0375">Hydrogen ion transport</keyword>
<keyword id="KW-0406">Ion transport</keyword>
<keyword id="KW-0472">Membrane</keyword>
<keyword id="KW-0496">Mitochondrion</keyword>
<keyword id="KW-0812">Transmembrane</keyword>
<keyword id="KW-1133">Transmembrane helix</keyword>
<keyword id="KW-0813">Transport</keyword>
<reference key="1">
    <citation type="journal article" date="1992" name="J. Mol. Evol.">
        <title>The complete mitochondrial DNA sequence of the harbor seal, Phoca vitulina.</title>
        <authorList>
            <person name="Arnason U."/>
            <person name="Johnsson E."/>
        </authorList>
    </citation>
    <scope>NUCLEOTIDE SEQUENCE [GENOMIC DNA]</scope>
</reference>
<reference key="2">
    <citation type="journal article" date="2006" name="Mol. Phylogenet. Evol.">
        <title>Pinniped phylogeny and a new hypothesis for their origin and dispersal.</title>
        <authorList>
            <person name="Arnason U."/>
            <person name="Gullberg A."/>
            <person name="Janke A."/>
            <person name="Kullberg M."/>
            <person name="Lehman N."/>
            <person name="Petrov E.A."/>
            <person name="Vainola R."/>
        </authorList>
    </citation>
    <scope>NUCLEOTIDE SEQUENCE [GENOMIC DNA]</scope>
</reference>
<feature type="chain" id="PRO_0000195568" description="ATP synthase F(0) complex subunit 8">
    <location>
        <begin position="1"/>
        <end position="67"/>
    </location>
</feature>
<feature type="transmembrane region" description="Helical" evidence="4">
    <location>
        <begin position="8"/>
        <end position="24"/>
    </location>
</feature>
<feature type="modified residue" description="N6-acetyllysine; alternate" evidence="2">
    <location>
        <position position="54"/>
    </location>
</feature>
<feature type="modified residue" description="N6-succinyllysine; alternate" evidence="2">
    <location>
        <position position="54"/>
    </location>
</feature>
<feature type="modified residue" description="N6-acetyllysine" evidence="2">
    <location>
        <position position="57"/>
    </location>
</feature>